<gene>
    <name evidence="16" type="primary">SLC39A13</name>
    <name type="synonym">ZIP13</name>
</gene>
<keyword id="KW-0025">Alternative splicing</keyword>
<keyword id="KW-0968">Cytoplasmic vesicle</keyword>
<keyword id="KW-0248">Ehlers-Danlos syndrome</keyword>
<keyword id="KW-0256">Endoplasmic reticulum</keyword>
<keyword id="KW-0333">Golgi apparatus</keyword>
<keyword id="KW-0406">Ion transport</keyword>
<keyword id="KW-0472">Membrane</keyword>
<keyword id="KW-1267">Proteomics identification</keyword>
<keyword id="KW-1185">Reference proteome</keyword>
<keyword id="KW-0812">Transmembrane</keyword>
<keyword id="KW-1133">Transmembrane helix</keyword>
<keyword id="KW-0813">Transport</keyword>
<keyword id="KW-0862">Zinc</keyword>
<keyword id="KW-0864">Zinc transport</keyword>
<proteinExistence type="evidence at protein level"/>
<dbReference type="EMBL" id="AK098651">
    <property type="protein sequence ID" value="BAC05365.1"/>
    <property type="status" value="ALT_FRAME"/>
    <property type="molecule type" value="mRNA"/>
</dbReference>
<dbReference type="EMBL" id="AC090559">
    <property type="status" value="NOT_ANNOTATED_CDS"/>
    <property type="molecule type" value="Genomic_DNA"/>
</dbReference>
<dbReference type="EMBL" id="CH471064">
    <property type="protein sequence ID" value="EAW67918.1"/>
    <property type="molecule type" value="Genomic_DNA"/>
</dbReference>
<dbReference type="EMBL" id="CH471064">
    <property type="protein sequence ID" value="EAW67919.1"/>
    <property type="molecule type" value="Genomic_DNA"/>
</dbReference>
<dbReference type="EMBL" id="CH471064">
    <property type="protein sequence ID" value="EAW67920.1"/>
    <property type="molecule type" value="Genomic_DNA"/>
</dbReference>
<dbReference type="EMBL" id="CH471064">
    <property type="protein sequence ID" value="EAW67921.1"/>
    <property type="molecule type" value="Genomic_DNA"/>
</dbReference>
<dbReference type="EMBL" id="CH471064">
    <property type="protein sequence ID" value="EAW67922.1"/>
    <property type="molecule type" value="Genomic_DNA"/>
</dbReference>
<dbReference type="EMBL" id="CH471064">
    <property type="protein sequence ID" value="EAW67923.1"/>
    <property type="molecule type" value="Genomic_DNA"/>
</dbReference>
<dbReference type="EMBL" id="BC008853">
    <property type="protein sequence ID" value="AAH08853.2"/>
    <property type="molecule type" value="mRNA"/>
</dbReference>
<dbReference type="EMBL" id="BC019016">
    <property type="protein sequence ID" value="AAH19016.1"/>
    <property type="molecule type" value="mRNA"/>
</dbReference>
<dbReference type="EMBL" id="AL133581">
    <property type="protein sequence ID" value="CAH56389.1"/>
    <property type="molecule type" value="mRNA"/>
</dbReference>
<dbReference type="CCDS" id="CCDS44592.1">
    <molecule id="Q96H72-1"/>
</dbReference>
<dbReference type="CCDS" id="CCDS7934.1">
    <molecule id="Q96H72-2"/>
</dbReference>
<dbReference type="RefSeq" id="NP_001121697.2">
    <molecule id="Q96H72-1"/>
    <property type="nucleotide sequence ID" value="NM_001128225.3"/>
</dbReference>
<dbReference type="RefSeq" id="NP_001317174.1">
    <property type="nucleotide sequence ID" value="NM_001330245.1"/>
</dbReference>
<dbReference type="RefSeq" id="NP_689477.2">
    <molecule id="Q96H72-2"/>
    <property type="nucleotide sequence ID" value="NM_152264.4"/>
</dbReference>
<dbReference type="RefSeq" id="XP_011518769.1">
    <molecule id="Q96H72-1"/>
    <property type="nucleotide sequence ID" value="XM_011520467.2"/>
</dbReference>
<dbReference type="RefSeq" id="XP_011518770.1">
    <property type="nucleotide sequence ID" value="XM_011520468.2"/>
</dbReference>
<dbReference type="RefSeq" id="XP_016874029.1">
    <molecule id="Q96H72-2"/>
    <property type="nucleotide sequence ID" value="XM_017018540.2"/>
</dbReference>
<dbReference type="SMR" id="Q96H72"/>
<dbReference type="BioGRID" id="124808">
    <property type="interactions" value="14"/>
</dbReference>
<dbReference type="FunCoup" id="Q96H72">
    <property type="interactions" value="1199"/>
</dbReference>
<dbReference type="IntAct" id="Q96H72">
    <property type="interactions" value="8"/>
</dbReference>
<dbReference type="MINT" id="Q96H72"/>
<dbReference type="STRING" id="9606.ENSP00000354689"/>
<dbReference type="DrugBank" id="DB14533">
    <property type="generic name" value="Zinc chloride"/>
</dbReference>
<dbReference type="DrugBank" id="DB14548">
    <property type="generic name" value="Zinc sulfate, unspecified form"/>
</dbReference>
<dbReference type="TCDB" id="2.A.5.4.12">
    <property type="family name" value="the zinc (zn(2+))-iron (fe(2+)) permease (zip) family"/>
</dbReference>
<dbReference type="iPTMnet" id="Q96H72"/>
<dbReference type="PhosphoSitePlus" id="Q96H72"/>
<dbReference type="BioMuta" id="SLC39A13"/>
<dbReference type="DMDM" id="296452971"/>
<dbReference type="jPOST" id="Q96H72"/>
<dbReference type="MassIVE" id="Q96H72"/>
<dbReference type="PaxDb" id="9606-ENSP00000354689"/>
<dbReference type="PeptideAtlas" id="Q96H72"/>
<dbReference type="ProteomicsDB" id="76707">
    <molecule id="Q96H72-1"/>
</dbReference>
<dbReference type="ProteomicsDB" id="76708">
    <molecule id="Q96H72-2"/>
</dbReference>
<dbReference type="Pumba" id="Q96H72"/>
<dbReference type="Antibodypedia" id="26741">
    <property type="antibodies" value="58 antibodies from 21 providers"/>
</dbReference>
<dbReference type="DNASU" id="91252"/>
<dbReference type="Ensembl" id="ENST00000354884.8">
    <molecule id="Q96H72-2"/>
    <property type="protein sequence ID" value="ENSP00000346956.4"/>
    <property type="gene ID" value="ENSG00000165915.14"/>
</dbReference>
<dbReference type="Ensembl" id="ENST00000362021.9">
    <molecule id="Q96H72-1"/>
    <property type="protein sequence ID" value="ENSP00000354689.4"/>
    <property type="gene ID" value="ENSG00000165915.14"/>
</dbReference>
<dbReference type="GeneID" id="91252"/>
<dbReference type="KEGG" id="hsa:91252"/>
<dbReference type="MANE-Select" id="ENST00000362021.9">
    <property type="protein sequence ID" value="ENSP00000354689.4"/>
    <property type="RefSeq nucleotide sequence ID" value="NM_001128225.3"/>
    <property type="RefSeq protein sequence ID" value="NP_001121697.2"/>
</dbReference>
<dbReference type="UCSC" id="uc001nff.5">
    <molecule id="Q96H72-1"/>
    <property type="organism name" value="human"/>
</dbReference>
<dbReference type="AGR" id="HGNC:20859"/>
<dbReference type="CTD" id="91252"/>
<dbReference type="DisGeNET" id="91252"/>
<dbReference type="GeneCards" id="SLC39A13"/>
<dbReference type="HGNC" id="HGNC:20859">
    <property type="gene designation" value="SLC39A13"/>
</dbReference>
<dbReference type="HPA" id="ENSG00000165915">
    <property type="expression patterns" value="Low tissue specificity"/>
</dbReference>
<dbReference type="MalaCards" id="SLC39A13"/>
<dbReference type="MIM" id="608735">
    <property type="type" value="gene"/>
</dbReference>
<dbReference type="MIM" id="612350">
    <property type="type" value="phenotype"/>
</dbReference>
<dbReference type="neXtProt" id="NX_Q96H72"/>
<dbReference type="OpenTargets" id="ENSG00000165915"/>
<dbReference type="Orphanet" id="157965">
    <property type="disease" value="SLC39A13-related spondylodysplastic Ehlers-Danlos syndrome"/>
</dbReference>
<dbReference type="PharmGKB" id="PA134948414"/>
<dbReference type="VEuPathDB" id="HostDB:ENSG00000165915"/>
<dbReference type="eggNOG" id="KOG2694">
    <property type="taxonomic scope" value="Eukaryota"/>
</dbReference>
<dbReference type="GeneTree" id="ENSGT00940000157349"/>
<dbReference type="InParanoid" id="Q96H72"/>
<dbReference type="OMA" id="HEVPHHI"/>
<dbReference type="OrthoDB" id="200954at2759"/>
<dbReference type="PAN-GO" id="Q96H72">
    <property type="GO annotations" value="3 GO annotations based on evolutionary models"/>
</dbReference>
<dbReference type="PhylomeDB" id="Q96H72"/>
<dbReference type="TreeFam" id="TF318470"/>
<dbReference type="PathwayCommons" id="Q96H72"/>
<dbReference type="SignaLink" id="Q96H72"/>
<dbReference type="BioGRID-ORCS" id="91252">
    <property type="hits" value="17 hits in 1155 CRISPR screens"/>
</dbReference>
<dbReference type="ChiTaRS" id="SLC39A13">
    <property type="organism name" value="human"/>
</dbReference>
<dbReference type="GenomeRNAi" id="91252"/>
<dbReference type="Pharos" id="Q96H72">
    <property type="development level" value="Tbio"/>
</dbReference>
<dbReference type="PRO" id="PR:Q96H72"/>
<dbReference type="Proteomes" id="UP000005640">
    <property type="component" value="Chromosome 11"/>
</dbReference>
<dbReference type="RNAct" id="Q96H72">
    <property type="molecule type" value="protein"/>
</dbReference>
<dbReference type="Bgee" id="ENSG00000165915">
    <property type="expression patterns" value="Expressed in metanephros cortex and 178 other cell types or tissues"/>
</dbReference>
<dbReference type="ExpressionAtlas" id="Q96H72">
    <property type="expression patterns" value="baseline and differential"/>
</dbReference>
<dbReference type="GO" id="GO:0030659">
    <property type="term" value="C:cytoplasmic vesicle membrane"/>
    <property type="evidence" value="ECO:0000315"/>
    <property type="project" value="UniProtKB"/>
</dbReference>
<dbReference type="GO" id="GO:0005789">
    <property type="term" value="C:endoplasmic reticulum membrane"/>
    <property type="evidence" value="ECO:0000314"/>
    <property type="project" value="UniProtKB"/>
</dbReference>
<dbReference type="GO" id="GO:0005794">
    <property type="term" value="C:Golgi apparatus"/>
    <property type="evidence" value="ECO:0000314"/>
    <property type="project" value="BHF-UCL"/>
</dbReference>
<dbReference type="GO" id="GO:0000139">
    <property type="term" value="C:Golgi membrane"/>
    <property type="evidence" value="ECO:0000314"/>
    <property type="project" value="UniProtKB"/>
</dbReference>
<dbReference type="GO" id="GO:0016020">
    <property type="term" value="C:membrane"/>
    <property type="evidence" value="ECO:0000314"/>
    <property type="project" value="BHF-UCL"/>
</dbReference>
<dbReference type="GO" id="GO:0048471">
    <property type="term" value="C:perinuclear region of cytoplasm"/>
    <property type="evidence" value="ECO:0000250"/>
    <property type="project" value="BHF-UCL"/>
</dbReference>
<dbReference type="GO" id="GO:0042803">
    <property type="term" value="F:protein homodimerization activity"/>
    <property type="evidence" value="ECO:0000353"/>
    <property type="project" value="BHF-UCL"/>
</dbReference>
<dbReference type="GO" id="GO:0005385">
    <property type="term" value="F:zinc ion transmembrane transporter activity"/>
    <property type="evidence" value="ECO:0000314"/>
    <property type="project" value="BHF-UCL"/>
</dbReference>
<dbReference type="GO" id="GO:0050873">
    <property type="term" value="P:brown fat cell differentiation"/>
    <property type="evidence" value="ECO:0000250"/>
    <property type="project" value="UniProtKB"/>
</dbReference>
<dbReference type="GO" id="GO:0061448">
    <property type="term" value="P:connective tissue development"/>
    <property type="evidence" value="ECO:0000315"/>
    <property type="project" value="BHF-UCL"/>
</dbReference>
<dbReference type="GO" id="GO:0006882">
    <property type="term" value="P:intracellular zinc ion homeostasis"/>
    <property type="evidence" value="ECO:0000314"/>
    <property type="project" value="BHF-UCL"/>
</dbReference>
<dbReference type="GO" id="GO:0071577">
    <property type="term" value="P:zinc ion transmembrane transport"/>
    <property type="evidence" value="ECO:0000314"/>
    <property type="project" value="BHF-UCL"/>
</dbReference>
<dbReference type="GO" id="GO:0006829">
    <property type="term" value="P:zinc ion transport"/>
    <property type="evidence" value="ECO:0000315"/>
    <property type="project" value="UniProtKB"/>
</dbReference>
<dbReference type="InterPro" id="IPR003689">
    <property type="entry name" value="ZIP"/>
</dbReference>
<dbReference type="PANTHER" id="PTHR16950">
    <property type="entry name" value="ZINC TRANSPORTER SLC39A7 HISTIDINE-RICH MEMBRANE PROTEIN KE4"/>
    <property type="match status" value="1"/>
</dbReference>
<dbReference type="PANTHER" id="PTHR16950:SF16">
    <property type="entry name" value="ZINC TRANSPORTER ZIP13"/>
    <property type="match status" value="1"/>
</dbReference>
<dbReference type="Pfam" id="PF02535">
    <property type="entry name" value="Zip"/>
    <property type="match status" value="1"/>
</dbReference>
<protein>
    <recommendedName>
        <fullName evidence="1">Zinc transporter ZIP13</fullName>
    </recommendedName>
    <alternativeName>
        <fullName>LIV-1 subfamily of ZIP zinc transporter 9</fullName>
        <shortName>LZT-Hs9</shortName>
    </alternativeName>
    <alternativeName>
        <fullName>Solute carrier family 39 member 13</fullName>
    </alternativeName>
    <alternativeName>
        <fullName>Zrt- and Irt-like protein 13</fullName>
        <shortName>ZIP-13</shortName>
    </alternativeName>
</protein>
<evidence type="ECO:0000250" key="1">
    <source>
        <dbReference type="UniProtKB" id="Q8BZH0"/>
    </source>
</evidence>
<evidence type="ECO:0000255" key="2"/>
<evidence type="ECO:0000269" key="3">
    <source>
    </source>
</evidence>
<evidence type="ECO:0000269" key="4">
    <source>
    </source>
</evidence>
<evidence type="ECO:0000269" key="5">
    <source>
    </source>
</evidence>
<evidence type="ECO:0000269" key="6">
    <source>
    </source>
</evidence>
<evidence type="ECO:0000269" key="7">
    <source>
    </source>
</evidence>
<evidence type="ECO:0000269" key="8">
    <source>
    </source>
</evidence>
<evidence type="ECO:0000269" key="9">
    <source>
    </source>
</evidence>
<evidence type="ECO:0000269" key="10">
    <source>
    </source>
</evidence>
<evidence type="ECO:0000303" key="11">
    <source>
    </source>
</evidence>
<evidence type="ECO:0000303" key="12">
    <source>
    </source>
</evidence>
<evidence type="ECO:0000303" key="13">
    <source>
    </source>
</evidence>
<evidence type="ECO:0000305" key="14"/>
<evidence type="ECO:0000305" key="15">
    <source>
    </source>
</evidence>
<evidence type="ECO:0000312" key="16">
    <source>
        <dbReference type="HGNC" id="HGNC:20859"/>
    </source>
</evidence>
<reference key="1">
    <citation type="journal article" date="2004" name="Nat. Genet.">
        <title>Complete sequencing and characterization of 21,243 full-length human cDNAs.</title>
        <authorList>
            <person name="Ota T."/>
            <person name="Suzuki Y."/>
            <person name="Nishikawa T."/>
            <person name="Otsuki T."/>
            <person name="Sugiyama T."/>
            <person name="Irie R."/>
            <person name="Wakamatsu A."/>
            <person name="Hayashi K."/>
            <person name="Sato H."/>
            <person name="Nagai K."/>
            <person name="Kimura K."/>
            <person name="Makita H."/>
            <person name="Sekine M."/>
            <person name="Obayashi M."/>
            <person name="Nishi T."/>
            <person name="Shibahara T."/>
            <person name="Tanaka T."/>
            <person name="Ishii S."/>
            <person name="Yamamoto J."/>
            <person name="Saito K."/>
            <person name="Kawai Y."/>
            <person name="Isono Y."/>
            <person name="Nakamura Y."/>
            <person name="Nagahari K."/>
            <person name="Murakami K."/>
            <person name="Yasuda T."/>
            <person name="Iwayanagi T."/>
            <person name="Wagatsuma M."/>
            <person name="Shiratori A."/>
            <person name="Sudo H."/>
            <person name="Hosoiri T."/>
            <person name="Kaku Y."/>
            <person name="Kodaira H."/>
            <person name="Kondo H."/>
            <person name="Sugawara M."/>
            <person name="Takahashi M."/>
            <person name="Kanda K."/>
            <person name="Yokoi T."/>
            <person name="Furuya T."/>
            <person name="Kikkawa E."/>
            <person name="Omura Y."/>
            <person name="Abe K."/>
            <person name="Kamihara K."/>
            <person name="Katsuta N."/>
            <person name="Sato K."/>
            <person name="Tanikawa M."/>
            <person name="Yamazaki M."/>
            <person name="Ninomiya K."/>
            <person name="Ishibashi T."/>
            <person name="Yamashita H."/>
            <person name="Murakawa K."/>
            <person name="Fujimori K."/>
            <person name="Tanai H."/>
            <person name="Kimata M."/>
            <person name="Watanabe M."/>
            <person name="Hiraoka S."/>
            <person name="Chiba Y."/>
            <person name="Ishida S."/>
            <person name="Ono Y."/>
            <person name="Takiguchi S."/>
            <person name="Watanabe S."/>
            <person name="Yosida M."/>
            <person name="Hotuta T."/>
            <person name="Kusano J."/>
            <person name="Kanehori K."/>
            <person name="Takahashi-Fujii A."/>
            <person name="Hara H."/>
            <person name="Tanase T.-O."/>
            <person name="Nomura Y."/>
            <person name="Togiya S."/>
            <person name="Komai F."/>
            <person name="Hara R."/>
            <person name="Takeuchi K."/>
            <person name="Arita M."/>
            <person name="Imose N."/>
            <person name="Musashino K."/>
            <person name="Yuuki H."/>
            <person name="Oshima A."/>
            <person name="Sasaki N."/>
            <person name="Aotsuka S."/>
            <person name="Yoshikawa Y."/>
            <person name="Matsunawa H."/>
            <person name="Ichihara T."/>
            <person name="Shiohata N."/>
            <person name="Sano S."/>
            <person name="Moriya S."/>
            <person name="Momiyama H."/>
            <person name="Satoh N."/>
            <person name="Takami S."/>
            <person name="Terashima Y."/>
            <person name="Suzuki O."/>
            <person name="Nakagawa S."/>
            <person name="Senoh A."/>
            <person name="Mizoguchi H."/>
            <person name="Goto Y."/>
            <person name="Shimizu F."/>
            <person name="Wakebe H."/>
            <person name="Hishigaki H."/>
            <person name="Watanabe T."/>
            <person name="Sugiyama A."/>
            <person name="Takemoto M."/>
            <person name="Kawakami B."/>
            <person name="Yamazaki M."/>
            <person name="Watanabe K."/>
            <person name="Kumagai A."/>
            <person name="Itakura S."/>
            <person name="Fukuzumi Y."/>
            <person name="Fujimori Y."/>
            <person name="Komiyama M."/>
            <person name="Tashiro H."/>
            <person name="Tanigami A."/>
            <person name="Fujiwara T."/>
            <person name="Ono T."/>
            <person name="Yamada K."/>
            <person name="Fujii Y."/>
            <person name="Ozaki K."/>
            <person name="Hirao M."/>
            <person name="Ohmori Y."/>
            <person name="Kawabata A."/>
            <person name="Hikiji T."/>
            <person name="Kobatake N."/>
            <person name="Inagaki H."/>
            <person name="Ikema Y."/>
            <person name="Okamoto S."/>
            <person name="Okitani R."/>
            <person name="Kawakami T."/>
            <person name="Noguchi S."/>
            <person name="Itoh T."/>
            <person name="Shigeta K."/>
            <person name="Senba T."/>
            <person name="Matsumura K."/>
            <person name="Nakajima Y."/>
            <person name="Mizuno T."/>
            <person name="Morinaga M."/>
            <person name="Sasaki M."/>
            <person name="Togashi T."/>
            <person name="Oyama M."/>
            <person name="Hata H."/>
            <person name="Watanabe M."/>
            <person name="Komatsu T."/>
            <person name="Mizushima-Sugano J."/>
            <person name="Satoh T."/>
            <person name="Shirai Y."/>
            <person name="Takahashi Y."/>
            <person name="Nakagawa K."/>
            <person name="Okumura K."/>
            <person name="Nagase T."/>
            <person name="Nomura N."/>
            <person name="Kikuchi H."/>
            <person name="Masuho Y."/>
            <person name="Yamashita R."/>
            <person name="Nakai K."/>
            <person name="Yada T."/>
            <person name="Nakamura Y."/>
            <person name="Ohara O."/>
            <person name="Isogai T."/>
            <person name="Sugano S."/>
        </authorList>
    </citation>
    <scope>NUCLEOTIDE SEQUENCE [LARGE SCALE MRNA] (ISOFORM 2)</scope>
    <scope>VARIANT GLY-28</scope>
    <source>
        <tissue>Testis</tissue>
    </source>
</reference>
<reference key="2">
    <citation type="journal article" date="2006" name="Nature">
        <title>Human chromosome 11 DNA sequence and analysis including novel gene identification.</title>
        <authorList>
            <person name="Taylor T.D."/>
            <person name="Noguchi H."/>
            <person name="Totoki Y."/>
            <person name="Toyoda A."/>
            <person name="Kuroki Y."/>
            <person name="Dewar K."/>
            <person name="Lloyd C."/>
            <person name="Itoh T."/>
            <person name="Takeda T."/>
            <person name="Kim D.-W."/>
            <person name="She X."/>
            <person name="Barlow K.F."/>
            <person name="Bloom T."/>
            <person name="Bruford E."/>
            <person name="Chang J.L."/>
            <person name="Cuomo C.A."/>
            <person name="Eichler E."/>
            <person name="FitzGerald M.G."/>
            <person name="Jaffe D.B."/>
            <person name="LaButti K."/>
            <person name="Nicol R."/>
            <person name="Park H.-S."/>
            <person name="Seaman C."/>
            <person name="Sougnez C."/>
            <person name="Yang X."/>
            <person name="Zimmer A.R."/>
            <person name="Zody M.C."/>
            <person name="Birren B.W."/>
            <person name="Nusbaum C."/>
            <person name="Fujiyama A."/>
            <person name="Hattori M."/>
            <person name="Rogers J."/>
            <person name="Lander E.S."/>
            <person name="Sakaki Y."/>
        </authorList>
    </citation>
    <scope>NUCLEOTIDE SEQUENCE [LARGE SCALE GENOMIC DNA]</scope>
</reference>
<reference key="3">
    <citation type="submission" date="2005-09" db="EMBL/GenBank/DDBJ databases">
        <authorList>
            <person name="Mural R.J."/>
            <person name="Istrail S."/>
            <person name="Sutton G.G."/>
            <person name="Florea L."/>
            <person name="Halpern A.L."/>
            <person name="Mobarry C.M."/>
            <person name="Lippert R."/>
            <person name="Walenz B."/>
            <person name="Shatkay H."/>
            <person name="Dew I."/>
            <person name="Miller J.R."/>
            <person name="Flanigan M.J."/>
            <person name="Edwards N.J."/>
            <person name="Bolanos R."/>
            <person name="Fasulo D."/>
            <person name="Halldorsson B.V."/>
            <person name="Hannenhalli S."/>
            <person name="Turner R."/>
            <person name="Yooseph S."/>
            <person name="Lu F."/>
            <person name="Nusskern D.R."/>
            <person name="Shue B.C."/>
            <person name="Zheng X.H."/>
            <person name="Zhong F."/>
            <person name="Delcher A.L."/>
            <person name="Huson D.H."/>
            <person name="Kravitz S.A."/>
            <person name="Mouchard L."/>
            <person name="Reinert K."/>
            <person name="Remington K.A."/>
            <person name="Clark A.G."/>
            <person name="Waterman M.S."/>
            <person name="Eichler E.E."/>
            <person name="Adams M.D."/>
            <person name="Hunkapiller M.W."/>
            <person name="Myers E.W."/>
            <person name="Venter J.C."/>
        </authorList>
    </citation>
    <scope>NUCLEOTIDE SEQUENCE [LARGE SCALE GENOMIC DNA]</scope>
</reference>
<reference key="4">
    <citation type="journal article" date="2004" name="Genome Res.">
        <title>The status, quality, and expansion of the NIH full-length cDNA project: the Mammalian Gene Collection (MGC).</title>
        <authorList>
            <consortium name="The MGC Project Team"/>
        </authorList>
    </citation>
    <scope>NUCLEOTIDE SEQUENCE [LARGE SCALE MRNA] (ISOFORMS 1 AND 2)</scope>
    <scope>VARIANT GLY-28</scope>
    <source>
        <tissue>Brain</tissue>
    </source>
</reference>
<reference key="5">
    <citation type="journal article" date="2007" name="BMC Genomics">
        <title>The full-ORF clone resource of the German cDNA consortium.</title>
        <authorList>
            <person name="Bechtel S."/>
            <person name="Rosenfelder H."/>
            <person name="Duda A."/>
            <person name="Schmidt C.P."/>
            <person name="Ernst U."/>
            <person name="Wellenreuther R."/>
            <person name="Mehrle A."/>
            <person name="Schuster C."/>
            <person name="Bahr A."/>
            <person name="Bloecker H."/>
            <person name="Heubner D."/>
            <person name="Hoerlein A."/>
            <person name="Michel G."/>
            <person name="Wedler H."/>
            <person name="Koehrer K."/>
            <person name="Ottenwaelder B."/>
            <person name="Poustka A."/>
            <person name="Wiemann S."/>
            <person name="Schupp I."/>
        </authorList>
    </citation>
    <scope>NUCLEOTIDE SEQUENCE [LARGE SCALE MRNA] OF 278-371 (ISOFORM 2)</scope>
    <scope>VARIANT GLY-28</scope>
    <source>
        <tissue>Testis</tissue>
    </source>
</reference>
<reference key="6">
    <citation type="journal article" date="2011" name="J. Biol. Chem.">
        <title>Biochemical characterization of human ZIP13 protein: a homo-dimerized zinc transporter involved in the spondylocheiro dysplastic Ehlers-Danlos syndrome.</title>
        <authorList>
            <person name="Bin B.H."/>
            <person name="Fukada T."/>
            <person name="Hosaka T."/>
            <person name="Yamasaki S."/>
            <person name="Ohashi W."/>
            <person name="Hojyo S."/>
            <person name="Miyai T."/>
            <person name="Nishida K."/>
            <person name="Yokoyama S."/>
            <person name="Hirano T."/>
        </authorList>
    </citation>
    <scope>FUNCTION</scope>
    <scope>TRANSPORTER ACTIVITY</scope>
    <scope>SUBCELLULAR LOCATION</scope>
    <scope>SUBUNIT</scope>
    <scope>TOPOLOGY</scope>
</reference>
<reference key="7">
    <citation type="journal article" date="2012" name="Proc. Natl. Acad. Sci. U.S.A.">
        <title>Promotion of vesicular zinc efflux by ZIP13 and its implications for spondylocheiro dysplastic Ehlers-Danlos syndrome.</title>
        <authorList>
            <person name="Jeong J."/>
            <person name="Walker J.M."/>
            <person name="Wang F."/>
            <person name="Park J.G."/>
            <person name="Palmer A.E."/>
            <person name="Giunta C."/>
            <person name="Rohrbach M."/>
            <person name="Steinmann B."/>
            <person name="Eide D.J."/>
        </authorList>
    </citation>
    <scope>FUNCTION</scope>
    <scope>TRANSPORTER ACTIVITY</scope>
    <scope>TISSUE SPECIFICITY</scope>
    <scope>INDUCTION</scope>
</reference>
<reference key="8">
    <citation type="journal article" date="2019" name="Int. J. Mol. Sci.">
        <title>Different Actions of Intracellular Zinc Transporters ZIP7 and ZIP13 Are Essential for Dermal Development.</title>
        <authorList>
            <person name="Lee M.G."/>
            <person name="Bin B.H."/>
        </authorList>
    </citation>
    <scope>INDUCTION</scope>
    <scope>SUBCELLULAR LOCATION</scope>
</reference>
<reference key="9">
    <citation type="journal article" date="2008" name="Am. J. Hum. Genet.">
        <title>Spondylocheiro dysplastic form of the Ehlers-Danlos syndrome -- an autosomal-recessive entity caused by mutations in the zinc transporter gene SLC39A13.</title>
        <authorList>
            <person name="Giunta C."/>
            <person name="Elcioglu N.H."/>
            <person name="Albrecht B."/>
            <person name="Eich G."/>
            <person name="Chambaz C."/>
            <person name="Janecke A.R."/>
            <person name="Yeowell H."/>
            <person name="Weis M."/>
            <person name="Eyre D.R."/>
            <person name="Kraenzlin M."/>
            <person name="Steinmann B."/>
        </authorList>
    </citation>
    <scope>VARIANT EDSSPD3 162-PHE--ALA-164 DEL</scope>
</reference>
<reference key="10">
    <citation type="journal article" date="2008" name="PLoS ONE">
        <title>The zinc transporter SLC39A13/ZIP13 is required for connective tissue development; its involvement in BMP/TGF-beta signaling pathways.</title>
        <authorList>
            <person name="Fukada T."/>
            <person name="Civic N."/>
            <person name="Furuichi T."/>
            <person name="Shimoda S."/>
            <person name="Mishima K."/>
            <person name="Higashiyama H."/>
            <person name="Idaira Y."/>
            <person name="Asada Y."/>
            <person name="Kitamura H."/>
            <person name="Yamasaki S."/>
            <person name="Hojyo S."/>
            <person name="Nakayama M."/>
            <person name="Ohara O."/>
            <person name="Koseki H."/>
            <person name="Dos Santos H.G."/>
            <person name="Bonafe L."/>
            <person name="Ha-Vinh R."/>
            <person name="Zankl A."/>
            <person name="Unger S."/>
            <person name="Kraenzlin M.E."/>
            <person name="Beckmann J.S."/>
            <person name="Saito I."/>
            <person name="Rivolta C."/>
            <person name="Ikegawa S."/>
            <person name="Superti-Furga A."/>
            <person name="Hirano T."/>
        </authorList>
    </citation>
    <scope>VARIANT EDSSPD3 ASP-74</scope>
</reference>
<name>S39AD_HUMAN</name>
<organism>
    <name type="scientific">Homo sapiens</name>
    <name type="common">Human</name>
    <dbReference type="NCBI Taxonomy" id="9606"/>
    <lineage>
        <taxon>Eukaryota</taxon>
        <taxon>Metazoa</taxon>
        <taxon>Chordata</taxon>
        <taxon>Craniata</taxon>
        <taxon>Vertebrata</taxon>
        <taxon>Euteleostomi</taxon>
        <taxon>Mammalia</taxon>
        <taxon>Eutheria</taxon>
        <taxon>Euarchontoglires</taxon>
        <taxon>Primates</taxon>
        <taxon>Haplorrhini</taxon>
        <taxon>Catarrhini</taxon>
        <taxon>Hominidae</taxon>
        <taxon>Homo</taxon>
    </lineage>
</organism>
<feature type="chain" id="PRO_0000312309" description="Zinc transporter ZIP13">
    <location>
        <begin position="1"/>
        <end position="371"/>
    </location>
</feature>
<feature type="topological domain" description="Lumenal" evidence="15">
    <location>
        <begin position="1"/>
        <end position="7"/>
    </location>
</feature>
<feature type="transmembrane region" description="Helical" evidence="2">
    <location>
        <begin position="8"/>
        <end position="28"/>
    </location>
</feature>
<feature type="topological domain" description="Cytoplasmic" evidence="2">
    <location>
        <begin position="29"/>
        <end position="68"/>
    </location>
</feature>
<feature type="transmembrane region" description="Helical" evidence="2">
    <location>
        <begin position="69"/>
        <end position="89"/>
    </location>
</feature>
<feature type="topological domain" description="Lumenal" evidence="2">
    <location>
        <begin position="90"/>
        <end position="108"/>
    </location>
</feature>
<feature type="transmembrane region" description="Helical" evidence="2">
    <location>
        <begin position="109"/>
        <end position="129"/>
    </location>
</feature>
<feature type="topological domain" description="Cytoplasmic" evidence="2">
    <location>
        <begin position="130"/>
        <end position="149"/>
    </location>
</feature>
<feature type="transmembrane region" description="Helical" evidence="2">
    <location>
        <begin position="150"/>
        <end position="170"/>
    </location>
</feature>
<feature type="topological domain" description="Lumenal" evidence="2">
    <location>
        <begin position="171"/>
        <end position="235"/>
    </location>
</feature>
<feature type="transmembrane region" description="Helical" evidence="2">
    <location>
        <begin position="236"/>
        <end position="256"/>
    </location>
</feature>
<feature type="topological domain" description="Cytoplasmic" evidence="2">
    <location>
        <begin position="257"/>
        <end position="278"/>
    </location>
</feature>
<feature type="transmembrane region" description="Helical" evidence="2">
    <location>
        <begin position="279"/>
        <end position="299"/>
    </location>
</feature>
<feature type="topological domain" description="Lumenal" evidence="15">
    <location>
        <begin position="300"/>
        <end position="316"/>
    </location>
</feature>
<feature type="transmembrane region" description="Helical" evidence="2">
    <location>
        <begin position="317"/>
        <end position="337"/>
    </location>
</feature>
<feature type="topological domain" description="Cytoplasmic" evidence="2">
    <location>
        <begin position="338"/>
        <end position="349"/>
    </location>
</feature>
<feature type="transmembrane region" description="Helical" evidence="2">
    <location>
        <begin position="350"/>
        <end position="370"/>
    </location>
</feature>
<feature type="topological domain" description="Lumenal" evidence="15">
    <location>
        <position position="371"/>
    </location>
</feature>
<feature type="short sequence motif" description="XEXPHE-motif">
    <location>
        <begin position="257"/>
        <end position="262"/>
    </location>
</feature>
<feature type="splice variant" id="VSP_029819" description="In isoform 2." evidence="11 12 13">
    <location>
        <begin position="307"/>
        <end position="313"/>
    </location>
</feature>
<feature type="sequence variant" id="VAR_037484" description="In dbSNP:rs2010519." evidence="3 4 5">
    <original>E</original>
    <variation>G</variation>
    <location>
        <position position="28"/>
    </location>
</feature>
<feature type="sequence variant" id="VAR_087851" description="In EDSSPD3; uncertain significance; dbSNP:rs121434363." evidence="7">
    <original>G</original>
    <variation>D</variation>
    <location>
        <position position="74"/>
    </location>
</feature>
<feature type="sequence variant" id="VAR_054127" description="In EDSSPD3." evidence="6">
    <location>
        <begin position="162"/>
        <end position="164"/>
    </location>
</feature>
<feature type="sequence variant" id="VAR_037485" description="In dbSNP:rs35978122.">
    <original>P</original>
    <variation>L</variation>
    <location>
        <position position="346"/>
    </location>
</feature>
<comment type="function">
    <text evidence="1 8 9">Functions as a zinc transporter transporting Zn(2+) from the Golgi apparatus to the cytosol and thus influences the zinc level at least in areas of the cytosol (PubMed:21917916, PubMed:23213233). May regulate beige adipocyte differentiation (By similarity).</text>
</comment>
<comment type="catalytic activity">
    <reaction evidence="8 9">
        <text>Zn(2+)(in) = Zn(2+)(out)</text>
        <dbReference type="Rhea" id="RHEA:29351"/>
        <dbReference type="ChEBI" id="CHEBI:29105"/>
    </reaction>
</comment>
<comment type="subunit">
    <text evidence="8">Homodimer.</text>
</comment>
<comment type="interaction">
    <interactant intactId="EBI-10287091">
        <id>Q96H72</id>
    </interactant>
    <interactant intactId="EBI-525714">
        <id>P25942</id>
        <label>CD40</label>
    </interactant>
    <organismsDiffer>false</organismsDiffer>
    <experiments>3</experiments>
</comment>
<comment type="interaction">
    <interactant intactId="EBI-10287091">
        <id>Q96H72</id>
    </interactant>
    <interactant intactId="EBI-1050125">
        <id>O15173</id>
        <label>PGRMC2</label>
    </interactant>
    <organismsDiffer>false</organismsDiffer>
    <experiments>3</experiments>
</comment>
<comment type="interaction">
    <interactant intactId="EBI-10287091">
        <id>Q96H72</id>
    </interactant>
    <interactant intactId="EBI-307352">
        <id>Q04864</id>
        <label>REL</label>
    </interactant>
    <organismsDiffer>false</organismsDiffer>
    <experiments>3</experiments>
</comment>
<comment type="interaction">
    <interactant intactId="EBI-10287091">
        <id>Q96H72</id>
    </interactant>
    <interactant intactId="EBI-533224">
        <id>P15884</id>
        <label>TCF4</label>
    </interactant>
    <organismsDiffer>false</organismsDiffer>
    <experiments>3</experiments>
</comment>
<comment type="subcellular location">
    <subcellularLocation>
        <location evidence="8 10">Golgi apparatus membrane</location>
        <topology evidence="8">Multi-pass membrane protein</topology>
    </subcellularLocation>
    <subcellularLocation>
        <location evidence="9">Cytoplasmic vesicle membrane</location>
    </subcellularLocation>
    <subcellularLocation>
        <location evidence="10">Endoplasmic reticulum membrane</location>
    </subcellularLocation>
</comment>
<comment type="alternative products">
    <event type="alternative splicing"/>
    <isoform>
        <id>Q96H72-1</id>
        <name>1</name>
        <sequence type="displayed"/>
    </isoform>
    <isoform>
        <id>Q96H72-2</id>
        <name>2</name>
        <sequence type="described" ref="VSP_029819"/>
    </isoform>
</comment>
<comment type="induction">
    <text evidence="9 10">Up-regulated under zinc-limiting conditions (PubMed:23213233). Induces by TGFB1 (PubMed:31412620).</text>
</comment>
<comment type="disease" evidence="6 7">
    <disease id="DI-01517">
        <name>Ehlers-Danlos syndrome, spondylodysplastic type, 3</name>
        <acronym>EDSSPD3</acronym>
        <description>A form of Ehlers-Danlos syndrome, a group of connective tissue disorders characterized by skin hyperextensibility, articular hypermobility, and tissue fragility. EDSSPD3 is an autosomal recessive form characterized by a generalized skeletal dysplasia involving mainly the spine and striking clinical abnormalities of the hands, in addition to classic features of Ehlers-Danlos syndrome. Clinical features include postnatal growth retardation, moderate short stature, protuberant eyes with bluish sclerae, hands with finely wrinkled palms, atrophy of the thenar muscles, and tapering fingers. Radiologic features include mild to moderate platyspondyly, mild to moderate osteopenia of the spine, small ileum, flat proximal femoral epiphyses, short, wide femoral necks, and broad metaphyses (elbows, knees, wrists, and interphalangeal joints).</description>
        <dbReference type="MIM" id="612350"/>
    </disease>
    <text>The disease is caused by variants affecting the gene represented in this entry.</text>
</comment>
<comment type="similarity">
    <text evidence="14">Belongs to the ZIP transporter (TC 2.A.5) family.</text>
</comment>
<comment type="sequence caution" evidence="14">
    <conflict type="frameshift">
        <sequence resource="EMBL-CDS" id="BAC05365"/>
    </conflict>
</comment>
<accession>Q96H72</accession>
<accession>D3DQR6</accession>
<accession>D3DQR7</accession>
<accession>E9PLY1</accession>
<accession>E9PQV3</accession>
<accession>Q659D9</accession>
<accession>Q8N7C9</accession>
<accession>Q8WV10</accession>
<sequence>MPGCPCPGCGMAGPRLLFLTALALELLERAGGSQPALRSRGTATACRLDNKESESWGALLSGERLDTWICSLLGSLMVGLSGVFPLLVIPLEMGTMLRSEAGAWRLKQLLSFALGGLLGNVFLHLLPEAWAYTCSASPGGEGQSLQQQQQLGLWVIAGILTFLALEKMFLDSKEEGTSQAPNKDPTAAAAALNGGHCLAQPAAEPGLGAVVRSIKVSGYLNLLANTIDNFTHGLAVAASFLVSKKIGLLTTMAILLHEIPHEVGDFAILLRAGFDRWSAAKLQLSTALGGLLGAGFAICTQSPKGVVGCSPAAEETAAWVLPFTSGGFLYIALVNVLPDLLEEEDPWRSLQQLLLLCAGIVVMVLFSLFVD</sequence>